<evidence type="ECO:0000255" key="1"/>
<evidence type="ECO:0000303" key="2">
    <source>
    </source>
</evidence>
<evidence type="ECO:0000305" key="3"/>
<evidence type="ECO:0000305" key="4">
    <source>
    </source>
</evidence>
<organism>
    <name type="scientific">Californiconus californicus</name>
    <name type="common">California cone</name>
    <name type="synonym">Conus californicus</name>
    <dbReference type="NCBI Taxonomy" id="1736779"/>
    <lineage>
        <taxon>Eukaryota</taxon>
        <taxon>Metazoa</taxon>
        <taxon>Spiralia</taxon>
        <taxon>Lophotrochozoa</taxon>
        <taxon>Mollusca</taxon>
        <taxon>Gastropoda</taxon>
        <taxon>Caenogastropoda</taxon>
        <taxon>Neogastropoda</taxon>
        <taxon>Conoidea</taxon>
        <taxon>Conidae</taxon>
        <taxon>Californiconus</taxon>
    </lineage>
</organism>
<protein>
    <recommendedName>
        <fullName evidence="3">Conotoxin Cal6.39</fullName>
    </recommendedName>
    <alternativeName>
        <fullName evidence="2">O3_cal6.3</fullName>
    </alternativeName>
</protein>
<feature type="signal peptide" evidence="1">
    <location>
        <begin position="1"/>
        <end position="18"/>
    </location>
</feature>
<feature type="chain" id="PRO_0000450983" description="Conotoxin Cal6.39" evidence="3">
    <location>
        <begin position="19"/>
        <end position="57"/>
    </location>
</feature>
<feature type="disulfide bond" evidence="3">
    <location>
        <begin position="22"/>
        <end position="36"/>
    </location>
</feature>
<feature type="disulfide bond" evidence="3">
    <location>
        <begin position="29"/>
        <end position="46"/>
    </location>
</feature>
<feature type="disulfide bond" evidence="3">
    <location>
        <begin position="35"/>
        <end position="52"/>
    </location>
</feature>
<comment type="function">
    <text evidence="3">Probable neurotoxin.</text>
</comment>
<comment type="subcellular location">
    <subcellularLocation>
        <location evidence="4">Secreted</location>
    </subcellularLocation>
</comment>
<comment type="tissue specificity">
    <text evidence="4">Expressed by the venom duct.</text>
</comment>
<comment type="domain">
    <text evidence="3">The cysteine framework is VI/VII (C-C-CC-C-C).</text>
</comment>
<comment type="domain">
    <text evidence="3">The presence of a 'disulfide through disulfide knot' structurally defines this protein as a knottin.</text>
</comment>
<reference key="1">
    <citation type="journal article" date="2019" name="Toxins">
        <title>The diversified O-superfamily in Californiconus californicus presents a conotoxin with antimycobacterial activity.</title>
        <authorList>
            <person name="Bernaldez-Sarabia J."/>
            <person name="Figueroa-Montiel A."/>
            <person name="Duenas S."/>
            <person name="Cervantes-Luevano K."/>
            <person name="Beltran J.A."/>
            <person name="Ortiz E."/>
            <person name="Jimenez S."/>
            <person name="Possani L.D."/>
            <person name="Paniagua-Solis J.F."/>
            <person name="Gonzalez-Canudas J."/>
            <person name="Licea-Navarro A."/>
        </authorList>
    </citation>
    <scope>NUCLEOTIDE SEQUENCE [MRNA]</scope>
    <source>
        <tissue>Venom duct</tissue>
    </source>
</reference>
<accession>P0DUA1</accession>
<name>C639_CONCL</name>
<proteinExistence type="inferred from homology"/>
<dbReference type="GO" id="GO:0005576">
    <property type="term" value="C:extracellular region"/>
    <property type="evidence" value="ECO:0007669"/>
    <property type="project" value="UniProtKB-SubCell"/>
</dbReference>
<dbReference type="GO" id="GO:0090729">
    <property type="term" value="F:toxin activity"/>
    <property type="evidence" value="ECO:0007669"/>
    <property type="project" value="UniProtKB-KW"/>
</dbReference>
<sequence>MSGTTVLLLTCLFLVTMATSDCDLYDDSCTGTEICCTPPGDYQGNCMEGEDCPSGGR</sequence>
<keyword id="KW-1015">Disulfide bond</keyword>
<keyword id="KW-0960">Knottin</keyword>
<keyword id="KW-0528">Neurotoxin</keyword>
<keyword id="KW-0964">Secreted</keyword>
<keyword id="KW-0732">Signal</keyword>
<keyword id="KW-0800">Toxin</keyword>